<dbReference type="EC" id="1.8.4.10" evidence="1"/>
<dbReference type="EMBL" id="AE002098">
    <property type="protein sequence ID" value="AAF41541.1"/>
    <property type="molecule type" value="Genomic_DNA"/>
</dbReference>
<dbReference type="EMBL" id="AE002098">
    <property type="protein sequence ID" value="AAF41576.1"/>
    <property type="molecule type" value="Genomic_DNA"/>
</dbReference>
<dbReference type="PIR" id="C81111">
    <property type="entry name" value="C81111"/>
</dbReference>
<dbReference type="RefSeq" id="NP_274183.1">
    <property type="nucleotide sequence ID" value="NC_003112.2"/>
</dbReference>
<dbReference type="RefSeq" id="NP_274219.1">
    <property type="nucleotide sequence ID" value="NC_003112.2"/>
</dbReference>
<dbReference type="RefSeq" id="WP_002232454.1">
    <property type="nucleotide sequence ID" value="NC_003112.2"/>
</dbReference>
<dbReference type="SMR" id="Q9JRT1"/>
<dbReference type="FunCoup" id="Q9JRT1">
    <property type="interactions" value="253"/>
</dbReference>
<dbReference type="STRING" id="122586.NMB1155"/>
<dbReference type="PaxDb" id="122586-NMB1155"/>
<dbReference type="KEGG" id="nme:NMB1155"/>
<dbReference type="KEGG" id="nme:NMB1193"/>
<dbReference type="PATRIC" id="fig|122586.8.peg.1460"/>
<dbReference type="HOGENOM" id="CLU_044089_1_0_4"/>
<dbReference type="InParanoid" id="Q9JRT1"/>
<dbReference type="OrthoDB" id="9794018at2"/>
<dbReference type="Proteomes" id="UP000000425">
    <property type="component" value="Chromosome"/>
</dbReference>
<dbReference type="GO" id="GO:0005737">
    <property type="term" value="C:cytoplasm"/>
    <property type="evidence" value="ECO:0007669"/>
    <property type="project" value="UniProtKB-SubCell"/>
</dbReference>
<dbReference type="GO" id="GO:0051539">
    <property type="term" value="F:4 iron, 4 sulfur cluster binding"/>
    <property type="evidence" value="ECO:0007669"/>
    <property type="project" value="UniProtKB-UniRule"/>
</dbReference>
<dbReference type="GO" id="GO:0043866">
    <property type="term" value="F:adenylyl-sulfate reductase (thioredoxin) activity"/>
    <property type="evidence" value="ECO:0007669"/>
    <property type="project" value="UniProtKB-EC"/>
</dbReference>
<dbReference type="GO" id="GO:0046872">
    <property type="term" value="F:metal ion binding"/>
    <property type="evidence" value="ECO:0007669"/>
    <property type="project" value="UniProtKB-KW"/>
</dbReference>
<dbReference type="GO" id="GO:0004604">
    <property type="term" value="F:phosphoadenylyl-sulfate reductase (thioredoxin) activity"/>
    <property type="evidence" value="ECO:0007669"/>
    <property type="project" value="UniProtKB-UniRule"/>
</dbReference>
<dbReference type="GO" id="GO:0019344">
    <property type="term" value="P:cysteine biosynthetic process"/>
    <property type="evidence" value="ECO:0007669"/>
    <property type="project" value="InterPro"/>
</dbReference>
<dbReference type="GO" id="GO:0070814">
    <property type="term" value="P:hydrogen sulfide biosynthetic process"/>
    <property type="evidence" value="ECO:0007669"/>
    <property type="project" value="UniProtKB-UniRule"/>
</dbReference>
<dbReference type="GO" id="GO:0019379">
    <property type="term" value="P:sulfate assimilation, phosphoadenylyl sulfate reduction by phosphoadenylyl-sulfate reductase (thioredoxin)"/>
    <property type="evidence" value="ECO:0007669"/>
    <property type="project" value="UniProtKB-UniRule"/>
</dbReference>
<dbReference type="CDD" id="cd23945">
    <property type="entry name" value="PAPS_reductase"/>
    <property type="match status" value="1"/>
</dbReference>
<dbReference type="Gene3D" id="3.40.50.620">
    <property type="entry name" value="HUPs"/>
    <property type="match status" value="1"/>
</dbReference>
<dbReference type="HAMAP" id="MF_00063">
    <property type="entry name" value="CysH"/>
    <property type="match status" value="1"/>
</dbReference>
<dbReference type="InterPro" id="IPR011798">
    <property type="entry name" value="APS_reductase"/>
</dbReference>
<dbReference type="InterPro" id="IPR004511">
    <property type="entry name" value="PAPS/APS_Rdtase"/>
</dbReference>
<dbReference type="InterPro" id="IPR002500">
    <property type="entry name" value="PAPS_reduct_dom"/>
</dbReference>
<dbReference type="InterPro" id="IPR014729">
    <property type="entry name" value="Rossmann-like_a/b/a_fold"/>
</dbReference>
<dbReference type="NCBIfam" id="TIGR02055">
    <property type="entry name" value="APS_reductase"/>
    <property type="match status" value="1"/>
</dbReference>
<dbReference type="NCBIfam" id="NF002537">
    <property type="entry name" value="PRK02090.1"/>
    <property type="match status" value="1"/>
</dbReference>
<dbReference type="PANTHER" id="PTHR46482:SF9">
    <property type="entry name" value="5'-ADENYLYLSULFATE REDUCTASE 1, CHLOROPLASTIC"/>
    <property type="match status" value="1"/>
</dbReference>
<dbReference type="PANTHER" id="PTHR46482">
    <property type="entry name" value="5'-ADENYLYLSULFATE REDUCTASE 3, CHLOROPLASTIC"/>
    <property type="match status" value="1"/>
</dbReference>
<dbReference type="Pfam" id="PF01507">
    <property type="entry name" value="PAPS_reduct"/>
    <property type="match status" value="1"/>
</dbReference>
<dbReference type="PIRSF" id="PIRSF000857">
    <property type="entry name" value="PAPS_reductase"/>
    <property type="match status" value="1"/>
</dbReference>
<dbReference type="SUPFAM" id="SSF52402">
    <property type="entry name" value="Adenine nucleotide alpha hydrolases-like"/>
    <property type="match status" value="1"/>
</dbReference>
<proteinExistence type="inferred from homology"/>
<reference key="1">
    <citation type="journal article" date="2000" name="Science">
        <title>Complete genome sequence of Neisseria meningitidis serogroup B strain MC58.</title>
        <authorList>
            <person name="Tettelin H."/>
            <person name="Saunders N.J."/>
            <person name="Heidelberg J.F."/>
            <person name="Jeffries A.C."/>
            <person name="Nelson K.E."/>
            <person name="Eisen J.A."/>
            <person name="Ketchum K.A."/>
            <person name="Hood D.W."/>
            <person name="Peden J.F."/>
            <person name="Dodson R.J."/>
            <person name="Nelson W.C."/>
            <person name="Gwinn M.L."/>
            <person name="DeBoy R.T."/>
            <person name="Peterson J.D."/>
            <person name="Hickey E.K."/>
            <person name="Haft D.H."/>
            <person name="Salzberg S.L."/>
            <person name="White O."/>
            <person name="Fleischmann R.D."/>
            <person name="Dougherty B.A."/>
            <person name="Mason T.M."/>
            <person name="Ciecko A."/>
            <person name="Parksey D.S."/>
            <person name="Blair E."/>
            <person name="Cittone H."/>
            <person name="Clark E.B."/>
            <person name="Cotton M.D."/>
            <person name="Utterback T.R."/>
            <person name="Khouri H.M."/>
            <person name="Qin H."/>
            <person name="Vamathevan J.J."/>
            <person name="Gill J."/>
            <person name="Scarlato V."/>
            <person name="Masignani V."/>
            <person name="Pizza M."/>
            <person name="Grandi G."/>
            <person name="Sun L."/>
            <person name="Smith H.O."/>
            <person name="Fraser C.M."/>
            <person name="Moxon E.R."/>
            <person name="Rappuoli R."/>
            <person name="Venter J.C."/>
        </authorList>
    </citation>
    <scope>NUCLEOTIDE SEQUENCE [LARGE SCALE GENOMIC DNA]</scope>
    <source>
        <strain>ATCC BAA-335 / MC58</strain>
    </source>
</reference>
<sequence length="246" mass="28091">METTLFKPALWQIPHIGSGGETALAEKTETLKQRLHRIVGSHRDARFASSLAAEDMVITDLIAGENLNIGIFTLDTGLLHTETLNLLDRLGRAYPHLRIKRFRPVREDADRYVESKGRFAFYDSVEARRECCRIRKTEPLNRAIAGADAWLTGQRREQSATRTELPFAEYDAGRGIGKYNPIFDWSEHDVWAYILANNVPYNDLYRQGFPSIGCDPCTRPVKAGEDIRAGRWWWEGRNSKECGLHK</sequence>
<accession>Q9JRT1</accession>
<comment type="function">
    <text evidence="1">Catalyzes the formation of sulfite from adenosine 5'-phosphosulfate (APS) using thioredoxin as an electron donor.</text>
</comment>
<comment type="catalytic activity">
    <reaction evidence="1">
        <text>[thioredoxin]-disulfide + sulfite + AMP + 2 H(+) = adenosine 5'-phosphosulfate + [thioredoxin]-dithiol</text>
        <dbReference type="Rhea" id="RHEA:21976"/>
        <dbReference type="Rhea" id="RHEA-COMP:10698"/>
        <dbReference type="Rhea" id="RHEA-COMP:10700"/>
        <dbReference type="ChEBI" id="CHEBI:15378"/>
        <dbReference type="ChEBI" id="CHEBI:17359"/>
        <dbReference type="ChEBI" id="CHEBI:29950"/>
        <dbReference type="ChEBI" id="CHEBI:50058"/>
        <dbReference type="ChEBI" id="CHEBI:58243"/>
        <dbReference type="ChEBI" id="CHEBI:456215"/>
        <dbReference type="EC" id="1.8.4.10"/>
    </reaction>
</comment>
<comment type="cofactor">
    <cofactor evidence="1">
        <name>[4Fe-4S] cluster</name>
        <dbReference type="ChEBI" id="CHEBI:49883"/>
    </cofactor>
    <text evidence="1">Binds 1 [4Fe-4S] cluster per subunit.</text>
</comment>
<comment type="pathway">
    <text evidence="1">Sulfur metabolism; hydrogen sulfide biosynthesis; sulfite from sulfate.</text>
</comment>
<comment type="subcellular location">
    <subcellularLocation>
        <location evidence="1">Cytoplasm</location>
    </subcellularLocation>
</comment>
<comment type="similarity">
    <text evidence="1">Belongs to the PAPS reductase family. CysH subfamily.</text>
</comment>
<keyword id="KW-0963">Cytoplasm</keyword>
<keyword id="KW-0408">Iron</keyword>
<keyword id="KW-0411">Iron-sulfur</keyword>
<keyword id="KW-0479">Metal-binding</keyword>
<keyword id="KW-0560">Oxidoreductase</keyword>
<keyword id="KW-1185">Reference proteome</keyword>
<feature type="chain" id="PRO_0000100636" description="Adenosine 5'-phosphosulfate reductase">
    <location>
        <begin position="1"/>
        <end position="246"/>
    </location>
</feature>
<feature type="active site" description="Nucleophile; cysteine thiosulfonate intermediate" evidence="1">
    <location>
        <position position="242"/>
    </location>
</feature>
<feature type="binding site" evidence="1">
    <location>
        <position position="131"/>
    </location>
    <ligand>
        <name>[4Fe-4S] cluster</name>
        <dbReference type="ChEBI" id="CHEBI:49883"/>
    </ligand>
</feature>
<feature type="binding site" evidence="1">
    <location>
        <position position="132"/>
    </location>
    <ligand>
        <name>[4Fe-4S] cluster</name>
        <dbReference type="ChEBI" id="CHEBI:49883"/>
    </ligand>
</feature>
<feature type="binding site" evidence="1">
    <location>
        <position position="214"/>
    </location>
    <ligand>
        <name>[4Fe-4S] cluster</name>
        <dbReference type="ChEBI" id="CHEBI:49883"/>
    </ligand>
</feature>
<feature type="binding site" evidence="1">
    <location>
        <position position="217"/>
    </location>
    <ligand>
        <name>[4Fe-4S] cluster</name>
        <dbReference type="ChEBI" id="CHEBI:49883"/>
    </ligand>
</feature>
<protein>
    <recommendedName>
        <fullName evidence="1">Adenosine 5'-phosphosulfate reductase</fullName>
        <shortName evidence="1">APS reductase</shortName>
        <ecNumber evidence="1">1.8.4.10</ecNumber>
    </recommendedName>
    <alternativeName>
        <fullName evidence="1">5'-adenylylsulfate reductase</fullName>
    </alternativeName>
    <alternativeName>
        <fullName evidence="1">Thioredoxin-dependent 5'-adenylylsulfate reductase</fullName>
    </alternativeName>
</protein>
<gene>
    <name evidence="1" type="primary">cysH1</name>
    <name type="ordered locus">NMB1155</name>
</gene>
<gene>
    <name evidence="1" type="primary">cysH2</name>
    <name type="ordered locus">NMB1193</name>
</gene>
<evidence type="ECO:0000255" key="1">
    <source>
        <dbReference type="HAMAP-Rule" id="MF_00063"/>
    </source>
</evidence>
<organism>
    <name type="scientific">Neisseria meningitidis serogroup B (strain ATCC BAA-335 / MC58)</name>
    <dbReference type="NCBI Taxonomy" id="122586"/>
    <lineage>
        <taxon>Bacteria</taxon>
        <taxon>Pseudomonadati</taxon>
        <taxon>Pseudomonadota</taxon>
        <taxon>Betaproteobacteria</taxon>
        <taxon>Neisseriales</taxon>
        <taxon>Neisseriaceae</taxon>
        <taxon>Neisseria</taxon>
    </lineage>
</organism>
<name>CYSH_NEIMB</name>